<reference key="1">
    <citation type="journal article" date="2005" name="Nature">
        <title>The genome of the social amoeba Dictyostelium discoideum.</title>
        <authorList>
            <person name="Eichinger L."/>
            <person name="Pachebat J.A."/>
            <person name="Gloeckner G."/>
            <person name="Rajandream M.A."/>
            <person name="Sucgang R."/>
            <person name="Berriman M."/>
            <person name="Song J."/>
            <person name="Olsen R."/>
            <person name="Szafranski K."/>
            <person name="Xu Q."/>
            <person name="Tunggal B."/>
            <person name="Kummerfeld S."/>
            <person name="Madera M."/>
            <person name="Konfortov B.A."/>
            <person name="Rivero F."/>
            <person name="Bankier A.T."/>
            <person name="Lehmann R."/>
            <person name="Hamlin N."/>
            <person name="Davies R."/>
            <person name="Gaudet P."/>
            <person name="Fey P."/>
            <person name="Pilcher K."/>
            <person name="Chen G."/>
            <person name="Saunders D."/>
            <person name="Sodergren E.J."/>
            <person name="Davis P."/>
            <person name="Kerhornou A."/>
            <person name="Nie X."/>
            <person name="Hall N."/>
            <person name="Anjard C."/>
            <person name="Hemphill L."/>
            <person name="Bason N."/>
            <person name="Farbrother P."/>
            <person name="Desany B."/>
            <person name="Just E."/>
            <person name="Morio T."/>
            <person name="Rost R."/>
            <person name="Churcher C.M."/>
            <person name="Cooper J."/>
            <person name="Haydock S."/>
            <person name="van Driessche N."/>
            <person name="Cronin A."/>
            <person name="Goodhead I."/>
            <person name="Muzny D.M."/>
            <person name="Mourier T."/>
            <person name="Pain A."/>
            <person name="Lu M."/>
            <person name="Harper D."/>
            <person name="Lindsay R."/>
            <person name="Hauser H."/>
            <person name="James K.D."/>
            <person name="Quiles M."/>
            <person name="Madan Babu M."/>
            <person name="Saito T."/>
            <person name="Buchrieser C."/>
            <person name="Wardroper A."/>
            <person name="Felder M."/>
            <person name="Thangavelu M."/>
            <person name="Johnson D."/>
            <person name="Knights A."/>
            <person name="Loulseged H."/>
            <person name="Mungall K.L."/>
            <person name="Oliver K."/>
            <person name="Price C."/>
            <person name="Quail M.A."/>
            <person name="Urushihara H."/>
            <person name="Hernandez J."/>
            <person name="Rabbinowitsch E."/>
            <person name="Steffen D."/>
            <person name="Sanders M."/>
            <person name="Ma J."/>
            <person name="Kohara Y."/>
            <person name="Sharp S."/>
            <person name="Simmonds M.N."/>
            <person name="Spiegler S."/>
            <person name="Tivey A."/>
            <person name="Sugano S."/>
            <person name="White B."/>
            <person name="Walker D."/>
            <person name="Woodward J.R."/>
            <person name="Winckler T."/>
            <person name="Tanaka Y."/>
            <person name="Shaulsky G."/>
            <person name="Schleicher M."/>
            <person name="Weinstock G.M."/>
            <person name="Rosenthal A."/>
            <person name="Cox E.C."/>
            <person name="Chisholm R.L."/>
            <person name="Gibbs R.A."/>
            <person name="Loomis W.F."/>
            <person name="Platzer M."/>
            <person name="Kay R.R."/>
            <person name="Williams J.G."/>
            <person name="Dear P.H."/>
            <person name="Noegel A.A."/>
            <person name="Barrell B.G."/>
            <person name="Kuspa A."/>
        </authorList>
    </citation>
    <scope>NUCLEOTIDE SEQUENCE [LARGE SCALE GENOMIC DNA]</scope>
    <source>
        <strain>AX4</strain>
    </source>
</reference>
<dbReference type="EC" id="3.2.1.23"/>
<dbReference type="EMBL" id="AAFI02000079">
    <property type="protein sequence ID" value="EAL64656.1"/>
    <property type="molecule type" value="Genomic_DNA"/>
</dbReference>
<dbReference type="RefSeq" id="XP_638187.1">
    <property type="nucleotide sequence ID" value="XM_633095.1"/>
</dbReference>
<dbReference type="SMR" id="Q54MV6"/>
<dbReference type="FunCoup" id="Q54MV6">
    <property type="interactions" value="1"/>
</dbReference>
<dbReference type="STRING" id="44689.Q54MV6"/>
<dbReference type="GlyCosmos" id="Q54MV6">
    <property type="glycosylation" value="14 sites, No reported glycans"/>
</dbReference>
<dbReference type="GlyGen" id="Q54MV6">
    <property type="glycosylation" value="14 sites"/>
</dbReference>
<dbReference type="PaxDb" id="44689-DDB0266381"/>
<dbReference type="EnsemblProtists" id="EAL64656">
    <property type="protein sequence ID" value="EAL64656"/>
    <property type="gene ID" value="DDB_G0285637"/>
</dbReference>
<dbReference type="GeneID" id="8625233"/>
<dbReference type="KEGG" id="ddi:DDB_G0285637"/>
<dbReference type="dictyBase" id="DDB_G0285637">
    <property type="gene designation" value="glb2"/>
</dbReference>
<dbReference type="VEuPathDB" id="AmoebaDB:DDB_G0285637"/>
<dbReference type="eggNOG" id="KOG0496">
    <property type="taxonomic scope" value="Eukaryota"/>
</dbReference>
<dbReference type="HOGENOM" id="CLU_007853_4_0_1"/>
<dbReference type="InParanoid" id="Q54MV6"/>
<dbReference type="OMA" id="CGNYNHG"/>
<dbReference type="PhylomeDB" id="Q54MV6"/>
<dbReference type="PRO" id="PR:Q54MV6"/>
<dbReference type="Proteomes" id="UP000002195">
    <property type="component" value="Chromosome 4"/>
</dbReference>
<dbReference type="GO" id="GO:0005773">
    <property type="term" value="C:vacuole"/>
    <property type="evidence" value="ECO:0000318"/>
    <property type="project" value="GO_Central"/>
</dbReference>
<dbReference type="GO" id="GO:0004565">
    <property type="term" value="F:beta-galactosidase activity"/>
    <property type="evidence" value="ECO:0000318"/>
    <property type="project" value="GO_Central"/>
</dbReference>
<dbReference type="GO" id="GO:0019388">
    <property type="term" value="P:galactose catabolic process"/>
    <property type="evidence" value="ECO:0000318"/>
    <property type="project" value="GO_Central"/>
</dbReference>
<dbReference type="FunFam" id="2.60.120.260:FF:000275">
    <property type="entry name" value="Beta-galactosidase"/>
    <property type="match status" value="1"/>
</dbReference>
<dbReference type="FunFam" id="3.20.20.80:FF:000006">
    <property type="entry name" value="Beta-galactosidase"/>
    <property type="match status" value="1"/>
</dbReference>
<dbReference type="FunFam" id="2.60.120.260:FF:000429">
    <property type="entry name" value="Probable beta-galactosidase 2"/>
    <property type="match status" value="1"/>
</dbReference>
<dbReference type="Gene3D" id="2.60.120.260">
    <property type="entry name" value="Galactose-binding domain-like"/>
    <property type="match status" value="2"/>
</dbReference>
<dbReference type="Gene3D" id="3.20.20.80">
    <property type="entry name" value="Glycosidases"/>
    <property type="match status" value="1"/>
</dbReference>
<dbReference type="InterPro" id="IPR048913">
    <property type="entry name" value="BetaGal_gal-bd"/>
</dbReference>
<dbReference type="InterPro" id="IPR008979">
    <property type="entry name" value="Galactose-bd-like_sf"/>
</dbReference>
<dbReference type="InterPro" id="IPR031330">
    <property type="entry name" value="Gly_Hdrlase_35_cat"/>
</dbReference>
<dbReference type="InterPro" id="IPR019801">
    <property type="entry name" value="Glyco_hydro_35_CS"/>
</dbReference>
<dbReference type="InterPro" id="IPR001944">
    <property type="entry name" value="Glycoside_Hdrlase_35"/>
</dbReference>
<dbReference type="InterPro" id="IPR017853">
    <property type="entry name" value="Glycoside_hydrolase_SF"/>
</dbReference>
<dbReference type="PANTHER" id="PTHR23421">
    <property type="entry name" value="BETA-GALACTOSIDASE RELATED"/>
    <property type="match status" value="1"/>
</dbReference>
<dbReference type="Pfam" id="PF21467">
    <property type="entry name" value="BetaGal_gal-bd"/>
    <property type="match status" value="1"/>
</dbReference>
<dbReference type="Pfam" id="PF01301">
    <property type="entry name" value="Glyco_hydro_35"/>
    <property type="match status" value="1"/>
</dbReference>
<dbReference type="PRINTS" id="PR00742">
    <property type="entry name" value="GLHYDRLASE35"/>
</dbReference>
<dbReference type="SUPFAM" id="SSF51445">
    <property type="entry name" value="(Trans)glycosidases"/>
    <property type="match status" value="1"/>
</dbReference>
<dbReference type="SUPFAM" id="SSF49785">
    <property type="entry name" value="Galactose-binding domain-like"/>
    <property type="match status" value="1"/>
</dbReference>
<dbReference type="PROSITE" id="PS01182">
    <property type="entry name" value="GLYCOSYL_HYDROL_F35"/>
    <property type="match status" value="1"/>
</dbReference>
<organism>
    <name type="scientific">Dictyostelium discoideum</name>
    <name type="common">Social amoeba</name>
    <dbReference type="NCBI Taxonomy" id="44689"/>
    <lineage>
        <taxon>Eukaryota</taxon>
        <taxon>Amoebozoa</taxon>
        <taxon>Evosea</taxon>
        <taxon>Eumycetozoa</taxon>
        <taxon>Dictyostelia</taxon>
        <taxon>Dictyosteliales</taxon>
        <taxon>Dictyosteliaceae</taxon>
        <taxon>Dictyostelium</taxon>
    </lineage>
</organism>
<gene>
    <name type="primary">glb2</name>
    <name type="ORF">DDB_G0285637</name>
</gene>
<sequence>MGTIKNNFQLLWLILLIVVLVNGKSINKNNNNNKNEIINVTYDGRSLIINGERKLLFSGSIHYPRTSEEMWPIILKQSKDAGIDIIDTYIFWNIHQPNSPSEYYFDGNANITKFLDLCKEFDLYVNLRIGPYVCAEWTYGGFPIWLKEIPNIVYRDYNQQWMNEMSIWMEFVVKYLDNYFAPNGGPIILAQVENEYGWLEQEYGINGTEYAKWSIDFAKSLNIGIPWIMCQQNDIESAINTCNGYYCHDWISSHWEQFPNQPSFWTENWIGWFENWGQAKPKRPVQDILYSNARFIAYGGSLINYYMWFGGTNFGRTSGGPWIITSYDYDAPLDEFGQPNEPKFSLSSKFHQVLHAIESDLLNNQPPKSPTFLSQFIEVHQYGINLSFITNYGTSTTPKIIQWMNQTYTIQPWSVLIIYNNEILFDTSFIPPNTLFNNNTINNFKPINQNIIQSIFQISDFNLNSGGGGGDGDGNSVNSVSPIEQLLITKDTSDYCWYSTNVTTTSLSYNEKGNIFLTITEFYDYVHIFIDNEYQGSAFSPSLCQLQLNPINNSTTFQLQILSMTIGLENYASHMENYTRGILGSILIGSQNLTNNQWLMKSGLIGENIKIFNNDNTINWQTSPSSSSSSLIQKPLTWYKLNISLVGLPIDISSTVYALDMSSMNKGMIWVNGYSIGRYWLIEATQSICNQSAIENYSYIGEYDPSNYRIDCNKPSQSIYSVPIDWLFNNNYNNQYATIIIIEELNGNPNEIQLLSNKIIN</sequence>
<accession>Q54MV6</accession>
<name>BGAL2_DICDI</name>
<comment type="function">
    <text evidence="1">Cleaves beta-linked terminal galactosyl residues from gangliosides, glycoproteins, and glycosaminoglycans.</text>
</comment>
<comment type="catalytic activity">
    <reaction>
        <text>Hydrolysis of terminal non-reducing beta-D-galactose residues in beta-D-galactosides.</text>
        <dbReference type="EC" id="3.2.1.23"/>
    </reaction>
</comment>
<comment type="similarity">
    <text evidence="3">Belongs to the glycosyl hydrolase 35 family.</text>
</comment>
<keyword id="KW-0325">Glycoprotein</keyword>
<keyword id="KW-0326">Glycosidase</keyword>
<keyword id="KW-0378">Hydrolase</keyword>
<keyword id="KW-1185">Reference proteome</keyword>
<keyword id="KW-0732">Signal</keyword>
<feature type="signal peptide" evidence="2">
    <location>
        <begin position="1"/>
        <end position="23"/>
    </location>
</feature>
<feature type="chain" id="PRO_0000328063" description="Probable beta-galactosidase 2">
    <location>
        <begin position="24"/>
        <end position="761"/>
    </location>
</feature>
<feature type="active site" description="Proton donor" evidence="2">
    <location>
        <position position="195"/>
    </location>
</feature>
<feature type="active site" description="Nucleophile" evidence="2">
    <location>
        <position position="267"/>
    </location>
</feature>
<feature type="glycosylation site" description="N-linked (GlcNAc...) asparagine" evidence="2">
    <location>
        <position position="39"/>
    </location>
</feature>
<feature type="glycosylation site" description="N-linked (GlcNAc...) asparagine" evidence="2">
    <location>
        <position position="110"/>
    </location>
</feature>
<feature type="glycosylation site" description="N-linked (GlcNAc...) asparagine" evidence="2">
    <location>
        <position position="206"/>
    </location>
</feature>
<feature type="glycosylation site" description="N-linked (GlcNAc...) asparagine" evidence="2">
    <location>
        <position position="385"/>
    </location>
</feature>
<feature type="glycosylation site" description="N-linked (GlcNAc...) asparagine" evidence="2">
    <location>
        <position position="405"/>
    </location>
</feature>
<feature type="glycosylation site" description="N-linked (GlcNAc...) asparagine" evidence="2">
    <location>
        <position position="438"/>
    </location>
</feature>
<feature type="glycosylation site" description="N-linked (GlcNAc...) asparagine" evidence="2">
    <location>
        <position position="501"/>
    </location>
</feature>
<feature type="glycosylation site" description="N-linked (GlcNAc...) asparagine" evidence="2">
    <location>
        <position position="552"/>
    </location>
</feature>
<feature type="glycosylation site" description="N-linked (GlcNAc...) asparagine" evidence="2">
    <location>
        <position position="553"/>
    </location>
</feature>
<feature type="glycosylation site" description="N-linked (GlcNAc...) asparagine" evidence="2">
    <location>
        <position position="577"/>
    </location>
</feature>
<feature type="glycosylation site" description="N-linked (GlcNAc...) asparagine" evidence="2">
    <location>
        <position position="592"/>
    </location>
</feature>
<feature type="glycosylation site" description="N-linked (GlcNAc...) asparagine" evidence="2">
    <location>
        <position position="642"/>
    </location>
</feature>
<feature type="glycosylation site" description="N-linked (GlcNAc...) asparagine" evidence="2">
    <location>
        <position position="690"/>
    </location>
</feature>
<feature type="glycosylation site" description="N-linked (GlcNAc...) asparagine" evidence="2">
    <location>
        <position position="696"/>
    </location>
</feature>
<protein>
    <recommendedName>
        <fullName>Probable beta-galactosidase 2</fullName>
        <shortName>Lactase 2</shortName>
        <ecNumber>3.2.1.23</ecNumber>
    </recommendedName>
</protein>
<evidence type="ECO:0000250" key="1"/>
<evidence type="ECO:0000255" key="2"/>
<evidence type="ECO:0000305" key="3"/>
<proteinExistence type="inferred from homology"/>